<evidence type="ECO:0000255" key="1">
    <source>
        <dbReference type="HAMAP-Rule" id="MF_00341"/>
    </source>
</evidence>
<protein>
    <recommendedName>
        <fullName evidence="1">UPF0146 protein OE_4661R</fullName>
    </recommendedName>
</protein>
<proteinExistence type="inferred from homology"/>
<accession>B0R888</accession>
<feature type="chain" id="PRO_1000120197" description="UPF0146 protein OE_4661R">
    <location>
        <begin position="1"/>
        <end position="129"/>
    </location>
</feature>
<gene>
    <name type="ordered locus">OE_4661R</name>
</gene>
<organism>
    <name type="scientific">Halobacterium salinarum (strain ATCC 29341 / DSM 671 / R1)</name>
    <dbReference type="NCBI Taxonomy" id="478009"/>
    <lineage>
        <taxon>Archaea</taxon>
        <taxon>Methanobacteriati</taxon>
        <taxon>Methanobacteriota</taxon>
        <taxon>Stenosarchaea group</taxon>
        <taxon>Halobacteria</taxon>
        <taxon>Halobacteriales</taxon>
        <taxon>Halobacteriaceae</taxon>
        <taxon>Halobacterium</taxon>
        <taxon>Halobacterium salinarum NRC-34001</taxon>
    </lineage>
</organism>
<sequence length="129" mass="13289">MTQPPTVAAVLAAHSRVVEVGIGARPDVAAALAERGCAVTATDIEACTVPETVRFVRDDVTDPERAVYEAADAVYALRCPPELQRAVVDVAGAVGAACYLTTLGGEPVVVPVSERRTVASGALFVARDA</sequence>
<reference key="1">
    <citation type="journal article" date="2008" name="Genomics">
        <title>Evolution in the laboratory: the genome of Halobacterium salinarum strain R1 compared to that of strain NRC-1.</title>
        <authorList>
            <person name="Pfeiffer F."/>
            <person name="Schuster S.C."/>
            <person name="Broicher A."/>
            <person name="Falb M."/>
            <person name="Palm P."/>
            <person name="Rodewald K."/>
            <person name="Ruepp A."/>
            <person name="Soppa J."/>
            <person name="Tittor J."/>
            <person name="Oesterhelt D."/>
        </authorList>
    </citation>
    <scope>NUCLEOTIDE SEQUENCE [LARGE SCALE GENOMIC DNA]</scope>
    <source>
        <strain>ATCC 29341 / DSM 671 / R1</strain>
    </source>
</reference>
<dbReference type="EMBL" id="AM774415">
    <property type="protein sequence ID" value="CAP14957.1"/>
    <property type="molecule type" value="Genomic_DNA"/>
</dbReference>
<dbReference type="RefSeq" id="WP_010903950.1">
    <property type="nucleotide sequence ID" value="NC_010364.1"/>
</dbReference>
<dbReference type="SMR" id="B0R888"/>
<dbReference type="EnsemblBacteria" id="CAP14957">
    <property type="protein sequence ID" value="CAP14957"/>
    <property type="gene ID" value="OE_4661R"/>
</dbReference>
<dbReference type="KEGG" id="hsl:OE_4661R"/>
<dbReference type="HOGENOM" id="CLU_148458_1_0_2"/>
<dbReference type="PhylomeDB" id="B0R888"/>
<dbReference type="Proteomes" id="UP000001321">
    <property type="component" value="Chromosome"/>
</dbReference>
<dbReference type="Gene3D" id="3.40.50.150">
    <property type="entry name" value="Vaccinia Virus protein VP39"/>
    <property type="match status" value="1"/>
</dbReference>
<dbReference type="HAMAP" id="MF_00341">
    <property type="entry name" value="UPF0146"/>
    <property type="match status" value="1"/>
</dbReference>
<dbReference type="InterPro" id="IPR029063">
    <property type="entry name" value="SAM-dependent_MTases_sf"/>
</dbReference>
<dbReference type="InterPro" id="IPR005353">
    <property type="entry name" value="UPF0146"/>
</dbReference>
<dbReference type="Pfam" id="PF03686">
    <property type="entry name" value="UPF0146"/>
    <property type="match status" value="1"/>
</dbReference>
<dbReference type="PIRSF" id="PIRSF016725">
    <property type="entry name" value="UCP016725"/>
    <property type="match status" value="1"/>
</dbReference>
<dbReference type="SUPFAM" id="SSF53335">
    <property type="entry name" value="S-adenosyl-L-methionine-dependent methyltransferases"/>
    <property type="match status" value="1"/>
</dbReference>
<name>Y4661_HALS3</name>
<comment type="similarity">
    <text evidence="1">Belongs to the UPF0146 family.</text>
</comment>